<dbReference type="EC" id="4.3.1.24" evidence="2"/>
<dbReference type="EMBL" id="D43803">
    <property type="protein sequence ID" value="BAA07861.1"/>
    <property type="molecule type" value="Genomic_DNA"/>
</dbReference>
<dbReference type="SMR" id="Q40910"/>
<dbReference type="UniPathway" id="UPA00713">
    <property type="reaction ID" value="UER00725"/>
</dbReference>
<dbReference type="GO" id="GO:0005737">
    <property type="term" value="C:cytoplasm"/>
    <property type="evidence" value="ECO:0007669"/>
    <property type="project" value="UniProtKB-SubCell"/>
</dbReference>
<dbReference type="GO" id="GO:0045548">
    <property type="term" value="F:phenylalanine ammonia-lyase activity"/>
    <property type="evidence" value="ECO:0007669"/>
    <property type="project" value="UniProtKB-EC"/>
</dbReference>
<dbReference type="GO" id="GO:0009800">
    <property type="term" value="P:cinnamic acid biosynthetic process"/>
    <property type="evidence" value="ECO:0007669"/>
    <property type="project" value="UniProtKB-UniPathway"/>
</dbReference>
<dbReference type="GO" id="GO:0006559">
    <property type="term" value="P:L-phenylalanine catabolic process"/>
    <property type="evidence" value="ECO:0007669"/>
    <property type="project" value="UniProtKB-KW"/>
</dbReference>
<dbReference type="CDD" id="cd00332">
    <property type="entry name" value="PAL-HAL"/>
    <property type="match status" value="1"/>
</dbReference>
<dbReference type="FunFam" id="1.10.274.20:FF:000001">
    <property type="entry name" value="Phenylalanine ammonia-lyase"/>
    <property type="match status" value="1"/>
</dbReference>
<dbReference type="FunFam" id="1.20.200.10:FF:000009">
    <property type="entry name" value="Phenylalanine ammonia-lyase"/>
    <property type="match status" value="1"/>
</dbReference>
<dbReference type="Gene3D" id="1.20.200.10">
    <property type="entry name" value="Fumarase/aspartase (Central domain)"/>
    <property type="match status" value="1"/>
</dbReference>
<dbReference type="Gene3D" id="1.10.275.10">
    <property type="entry name" value="Fumarase/aspartase (N-terminal domain)"/>
    <property type="match status" value="1"/>
</dbReference>
<dbReference type="Gene3D" id="1.10.274.20">
    <property type="entry name" value="Phenylalanine ammonia-lyase 1, domain 3"/>
    <property type="match status" value="1"/>
</dbReference>
<dbReference type="InterPro" id="IPR001106">
    <property type="entry name" value="Aromatic_Lyase"/>
</dbReference>
<dbReference type="InterPro" id="IPR024083">
    <property type="entry name" value="Fumarase/histidase_N"/>
</dbReference>
<dbReference type="InterPro" id="IPR008948">
    <property type="entry name" value="L-Aspartase-like"/>
</dbReference>
<dbReference type="InterPro" id="IPR022313">
    <property type="entry name" value="Phe/His_NH3-lyase_AS"/>
</dbReference>
<dbReference type="InterPro" id="IPR005922">
    <property type="entry name" value="Phe_NH3-lyase"/>
</dbReference>
<dbReference type="InterPro" id="IPR023144">
    <property type="entry name" value="Phe_NH3-lyase_shielding_dom_sf"/>
</dbReference>
<dbReference type="NCBIfam" id="TIGR01226">
    <property type="entry name" value="phe_am_lyase"/>
    <property type="match status" value="1"/>
</dbReference>
<dbReference type="PANTHER" id="PTHR10362">
    <property type="entry name" value="HISTIDINE AMMONIA-LYASE"/>
    <property type="match status" value="1"/>
</dbReference>
<dbReference type="Pfam" id="PF00221">
    <property type="entry name" value="Lyase_aromatic"/>
    <property type="match status" value="1"/>
</dbReference>
<dbReference type="SUPFAM" id="SSF48557">
    <property type="entry name" value="L-aspartase-like"/>
    <property type="match status" value="1"/>
</dbReference>
<dbReference type="PROSITE" id="PS00488">
    <property type="entry name" value="PAL_HISTIDASE"/>
    <property type="match status" value="1"/>
</dbReference>
<feature type="chain" id="PRO_0000215415" description="Phenylalanine ammonia-lyase G4">
    <location>
        <begin position="1" status="less than"/>
        <end position="571"/>
    </location>
</feature>
<feature type="binding site" evidence="3">
    <location>
        <position position="114"/>
    </location>
    <ligand>
        <name>(E)-cinnamate</name>
        <dbReference type="ChEBI" id="CHEBI:15669"/>
    </ligand>
</feature>
<feature type="binding site" evidence="3">
    <location>
        <position position="202"/>
    </location>
    <ligand>
        <name>(E)-cinnamate</name>
        <dbReference type="ChEBI" id="CHEBI:15669"/>
    </ligand>
</feature>
<feature type="binding site" evidence="3">
    <location>
        <position position="208"/>
    </location>
    <ligand>
        <name>(E)-cinnamate</name>
        <dbReference type="ChEBI" id="CHEBI:15669"/>
    </ligand>
</feature>
<feature type="binding site" evidence="3">
    <location>
        <position position="238"/>
    </location>
    <ligand>
        <name>(E)-cinnamate</name>
        <dbReference type="ChEBI" id="CHEBI:15669"/>
    </ligand>
</feature>
<feature type="binding site" evidence="1">
    <location>
        <position position="311"/>
    </location>
    <ligand>
        <name>(E)-cinnamate</name>
        <dbReference type="ChEBI" id="CHEBI:15669"/>
    </ligand>
</feature>
<feature type="binding site" evidence="1">
    <location>
        <position position="339"/>
    </location>
    <ligand>
        <name>(E)-cinnamate</name>
        <dbReference type="ChEBI" id="CHEBI:15669"/>
    </ligand>
</feature>
<feature type="binding site" evidence="3">
    <location>
        <position position="342"/>
    </location>
    <ligand>
        <name>(E)-cinnamate</name>
        <dbReference type="ChEBI" id="CHEBI:15669"/>
    </ligand>
</feature>
<feature type="modified residue" description="2,3-didehydroalanine (Ser)" evidence="4">
    <location>
        <position position="57"/>
    </location>
</feature>
<feature type="cross-link" description="5-imidazolinone (Ala-Gly)" evidence="3">
    <location>
        <begin position="56"/>
        <end position="58"/>
    </location>
</feature>
<feature type="non-terminal residue">
    <location>
        <position position="1"/>
    </location>
</feature>
<accession>Q40910</accession>
<keyword id="KW-0963">Cytoplasm</keyword>
<keyword id="KW-0456">Lyase</keyword>
<keyword id="KW-0585">Phenylalanine catabolism</keyword>
<keyword id="KW-0587">Phenylpropanoid metabolism</keyword>
<name>PAL4_POPKI</name>
<protein>
    <recommendedName>
        <fullName>Phenylalanine ammonia-lyase G4</fullName>
        <ecNumber evidence="2">4.3.1.24</ecNumber>
    </recommendedName>
</protein>
<comment type="function">
    <text evidence="2">This is a key enzyme of plant metabolism catalyzing the first reaction in the biosynthesis from L-phenylalanine of a wide variety of natural products based on the phenylpropane skeleton.</text>
</comment>
<comment type="catalytic activity">
    <reaction evidence="2">
        <text>L-phenylalanine = (E)-cinnamate + NH4(+)</text>
        <dbReference type="Rhea" id="RHEA:21384"/>
        <dbReference type="ChEBI" id="CHEBI:15669"/>
        <dbReference type="ChEBI" id="CHEBI:28938"/>
        <dbReference type="ChEBI" id="CHEBI:58095"/>
        <dbReference type="EC" id="4.3.1.24"/>
    </reaction>
</comment>
<comment type="pathway">
    <text evidence="5">Phenylpropanoid metabolism; trans-cinnamate biosynthesis; trans-cinnamate from L-phenylalanine: step 1/1.</text>
</comment>
<comment type="subunit">
    <text evidence="2">Homotetramer.</text>
</comment>
<comment type="subcellular location">
    <subcellularLocation>
        <location evidence="5">Cytoplasm</location>
    </subcellularLocation>
</comment>
<comment type="PTM">
    <text evidence="3">Contains an active site 4-methylidene-imidazol-5-one (MIO), which is formed autocatalytically by cyclization and dehydration of residues Ala-Ser-Gly.</text>
</comment>
<comment type="similarity">
    <text evidence="5">Belongs to the PAL/histidase family.</text>
</comment>
<proteinExistence type="inferred from homology"/>
<evidence type="ECO:0000250" key="1">
    <source>
        <dbReference type="UniProtKB" id="P11544"/>
    </source>
</evidence>
<evidence type="ECO:0000250" key="2">
    <source>
        <dbReference type="UniProtKB" id="P24481"/>
    </source>
</evidence>
<evidence type="ECO:0000250" key="3">
    <source>
        <dbReference type="UniProtKB" id="Q68G84"/>
    </source>
</evidence>
<evidence type="ECO:0000255" key="4">
    <source>
        <dbReference type="PROSITE-ProRule" id="PRU10122"/>
    </source>
</evidence>
<evidence type="ECO:0000305" key="5"/>
<organism>
    <name type="scientific">Populus kitakamiensis</name>
    <name type="common">Aspen</name>
    <name type="synonym">Populus sieboldii x Populus grandidentata</name>
    <dbReference type="NCBI Taxonomy" id="34292"/>
    <lineage>
        <taxon>Eukaryota</taxon>
        <taxon>Viridiplantae</taxon>
        <taxon>Streptophyta</taxon>
        <taxon>Embryophyta</taxon>
        <taxon>Tracheophyta</taxon>
        <taxon>Spermatophyta</taxon>
        <taxon>Magnoliopsida</taxon>
        <taxon>eudicotyledons</taxon>
        <taxon>Gunneridae</taxon>
        <taxon>Pentapetalae</taxon>
        <taxon>rosids</taxon>
        <taxon>fabids</taxon>
        <taxon>Malpighiales</taxon>
        <taxon>Salicaceae</taxon>
        <taxon>Saliceae</taxon>
        <taxon>Populus</taxon>
    </lineage>
</organism>
<sequence>STHTLPHSASRAAMLVRINTLLQGYSGIRFEILEAITKLLNHNITPCLPLRGTITASGDLVPLSYIAGLLTGRPNSKAVGPNGETMAAAEAFTLAGINGGFFELQPKEGLALVNGTAVGSGLASMVLFETNVLAILSEVLSAIFAEVMQGKPEFTDHLTHKLKHHPGQIEAAAVMEHILDGSSYVKAAQKLHEIDPLQKPKQDRYALRTSPQWLGPLIEVIRTSTKMIEREINSVNDNPLIDVSRNKALHGGNFPGSPIGVSMDNTLVLAIASIGKLMFAQFSELVNDYYNNGLPSNLTGGRNPSLDYGFKGAEIAMASYCSELQFLANPVTNHVQSAEQHNQDVNSLGLISARKTAEAVEILNVMSTTWLVALCQAIDLRHIEENLKNTVKNTVSQVAKRVLTMGFNGELHPSRFCEKDLLKVVDREYVFTYIDDPCSATYPLMQKLRQVLVDHALMNGEKEQNSSTSIFQKIGAFEEELKILLPKEVESARLELENGNPAIPNRITDRRSYPLYKFVREELGTVLLTGEKVGSPGEEFDKVFTAICAGKLIDPCWSVLKEWNGAPLPLC</sequence>
<gene>
    <name type="primary">PALG4</name>
</gene>
<reference key="1">
    <citation type="journal article" date="1995" name="Plant Mol. Biol.">
        <title>Characterization of the structure and determination of mRNA levels of the phenylalanine ammonia-lyase gene family from Populus kitakamiensis.</title>
        <authorList>
            <person name="Osakabe Y."/>
            <person name="Osakabe K."/>
            <person name="Kawai S."/>
            <person name="Katayama Y."/>
            <person name="Morohoshi N."/>
        </authorList>
    </citation>
    <scope>NUCLEOTIDE SEQUENCE [GENOMIC DNA]</scope>
</reference>